<name>PIM1_BOVIN</name>
<comment type="function">
    <text evidence="2 3">Proto-oncogene with serine/threonine kinase activity involved in cell survival and cell proliferation and thus providing a selective advantage in tumorigenesis. Exerts its oncogenic activity through: the regulation of MYC transcriptional activity, the regulation of cell cycle progression and by phosphorylation and inhibition of proapoptotic proteins (BAD, MAP3K5, FOXO3) (By similarity). Phosphorylation of MYC leads to an increase of MYC protein stability and thereby an increase of transcriptional activity. The stabilization of MYC exerted by PIM1 might explain partly the strong synergism between these two oncogenes in tumorigenesis. Mediates survival signaling through phosphorylation of BAD, which induces release of the anti-apoptotic protein Bcl-X(L)/BCL2L1 (By similarity). Phosphorylation of MAP3K5, another proapoptotic protein, by PIM1, significantly decreases MAP3K5 kinase activity and inhibits MAP3K5-mediated phosphorylation of JNK and JNK/p38MAPK subsequently reducing caspase-3 activation and cell apoptosis. Stimulates cell cycle progression at the G1-S and G2-M transitions by phosphorylation of CDC25A and CDC25C. Phosphorylation of CDKN1A, a regulator of cell cycle progression at G1, results in the relocation of CDKN1A to the cytoplasm and enhanced CDKN1A protein stability. Promotes cell cycle progression and tumorigenesis by down-regulating expression of a regulator of cell cycle progression, CDKN1B, at both transcriptional and post-translational levels. Phosphorylation of CDKN1B, induces 14-3-3 proteins binding, nuclear export and proteasome-dependent degradation. May affect the structure or silencing of chromatin by phosphorylating HP1 gamma/CBX3 (By similarity). Acts also as a regulator of homing and migration of bone marrow cells involving functional interaction with the CXCL12-CXCR4 signaling axis (By similarity). Acts as a positive regulator of mTORC1 signaling by mediating phosphorylation and inhibition of DEPDC5 component of the GATOR1 complex. Acts as a negative regulator of innate immunity by mediating phosphorylation and inactivation of GBP1 in absence of infection: phosphorylation of GBP1 induces interaction with 14-3-3 protein sigma (SFN) and retention in the cytosol (By similarity). Also phosphorylates and activates the ATP-binding cassette transporter ABCG2, allowing resistance to drugs through their excretion from cells (By similarity). Promotes brown adipocyte differentiation (By similarity).</text>
</comment>
<comment type="catalytic activity">
    <reaction>
        <text>L-seryl-[protein] + ATP = O-phospho-L-seryl-[protein] + ADP + H(+)</text>
        <dbReference type="Rhea" id="RHEA:17989"/>
        <dbReference type="Rhea" id="RHEA-COMP:9863"/>
        <dbReference type="Rhea" id="RHEA-COMP:11604"/>
        <dbReference type="ChEBI" id="CHEBI:15378"/>
        <dbReference type="ChEBI" id="CHEBI:29999"/>
        <dbReference type="ChEBI" id="CHEBI:30616"/>
        <dbReference type="ChEBI" id="CHEBI:83421"/>
        <dbReference type="ChEBI" id="CHEBI:456216"/>
        <dbReference type="EC" id="2.7.11.1"/>
    </reaction>
</comment>
<comment type="catalytic activity">
    <reaction>
        <text>L-threonyl-[protein] + ATP = O-phospho-L-threonyl-[protein] + ADP + H(+)</text>
        <dbReference type="Rhea" id="RHEA:46608"/>
        <dbReference type="Rhea" id="RHEA-COMP:11060"/>
        <dbReference type="Rhea" id="RHEA-COMP:11605"/>
        <dbReference type="ChEBI" id="CHEBI:15378"/>
        <dbReference type="ChEBI" id="CHEBI:30013"/>
        <dbReference type="ChEBI" id="CHEBI:30616"/>
        <dbReference type="ChEBI" id="CHEBI:61977"/>
        <dbReference type="ChEBI" id="CHEBI:456216"/>
        <dbReference type="EC" id="2.7.11.1"/>
    </reaction>
</comment>
<comment type="cofactor">
    <cofactor evidence="3">
        <name>Mg(2+)</name>
        <dbReference type="ChEBI" id="CHEBI:18420"/>
    </cofactor>
</comment>
<comment type="subunit">
    <text evidence="2 3">Interacts with RP9 (By similarity). Interacts with HSP90AA1, this interaction stabilizes PIM1 protein levels. Interacts (ubiquitinated form) with HSP70 and promotes its proteasomal degradation (By similarity).</text>
</comment>
<comment type="subcellular location">
    <subcellularLocation>
        <location evidence="1">Cytoplasm</location>
    </subcellularLocation>
    <subcellularLocation>
        <location evidence="1">Nucleus</location>
    </subcellularLocation>
</comment>
<comment type="PTM">
    <text evidence="1">Autophosphorylated (By similarity). Phosphorylated. Interaction with PPP2CA promotes dephosphorylation (By similarity).</text>
</comment>
<comment type="PTM">
    <text evidence="1">Ubiquitinated, leading to proteasomal degradation.</text>
</comment>
<comment type="similarity">
    <text evidence="6">Belongs to the protein kinase superfamily. CAMK Ser/Thr protein kinase family. PIM subfamily.</text>
</comment>
<sequence length="313" mass="35630">MLLSKINSLAHLRAAPCSDLHATKLAPGKEKEPLESQYQVGPLLGSGGFGSVYSGIRVADNLPVAIKHVEKDRISDWGELPNGTRVPMEVVLLKKVSSGFSGVIRLLDWFERPDSFVLILERPEPVQDLFDFITERGALQEELARSFFWQVLEAVRHCHDCGVLHRDIKDENILIDLNRGELKLIDFGSGALLKDTVYTDFDGTRVYSPPEWIRYHRYHGRSAAVWSLGILLYDMVCGDIPFEHDEEIVRGQVFFRQRVSSECQHLIRWCLALRPSDRPTFEEIQNHPWMQDVLLPQETAEIHLHSLSPGPSK</sequence>
<gene>
    <name type="primary">PIM1</name>
</gene>
<feature type="chain" id="PRO_0000086528" description="Serine/threonine-protein kinase pim-1">
    <location>
        <begin position="1"/>
        <end position="313"/>
    </location>
</feature>
<feature type="domain" description="Protein kinase" evidence="4">
    <location>
        <begin position="38"/>
        <end position="290"/>
    </location>
</feature>
<feature type="active site" description="Proton acceptor" evidence="4 5">
    <location>
        <position position="167"/>
    </location>
</feature>
<feature type="binding site" evidence="4">
    <location>
        <begin position="44"/>
        <end position="52"/>
    </location>
    <ligand>
        <name>ATP</name>
        <dbReference type="ChEBI" id="CHEBI:30616"/>
    </ligand>
</feature>
<feature type="binding site" evidence="4">
    <location>
        <position position="67"/>
    </location>
    <ligand>
        <name>ATP</name>
        <dbReference type="ChEBI" id="CHEBI:30616"/>
    </ligand>
</feature>
<feature type="binding site" evidence="4">
    <location>
        <position position="121"/>
    </location>
    <ligand>
        <name>ATP</name>
        <dbReference type="ChEBI" id="CHEBI:30616"/>
    </ligand>
</feature>
<feature type="binding site" evidence="4">
    <location>
        <position position="128"/>
    </location>
    <ligand>
        <name>ATP</name>
        <dbReference type="ChEBI" id="CHEBI:30616"/>
    </ligand>
</feature>
<feature type="modified residue" description="Phosphoserine" evidence="3">
    <location>
        <position position="8"/>
    </location>
</feature>
<feature type="modified residue" description="Phosphothreonine" evidence="3">
    <location>
        <position position="23"/>
    </location>
</feature>
<feature type="modified residue" description="Phosphoserine" evidence="3">
    <location>
        <position position="98"/>
    </location>
</feature>
<feature type="modified residue" description="Phosphoserine" evidence="3">
    <location>
        <position position="261"/>
    </location>
</feature>
<proteinExistence type="evidence at transcript level"/>
<organism>
    <name type="scientific">Bos taurus</name>
    <name type="common">Bovine</name>
    <dbReference type="NCBI Taxonomy" id="9913"/>
    <lineage>
        <taxon>Eukaryota</taxon>
        <taxon>Metazoa</taxon>
        <taxon>Chordata</taxon>
        <taxon>Craniata</taxon>
        <taxon>Vertebrata</taxon>
        <taxon>Euteleostomi</taxon>
        <taxon>Mammalia</taxon>
        <taxon>Eutheria</taxon>
        <taxon>Laurasiatheria</taxon>
        <taxon>Artiodactyla</taxon>
        <taxon>Ruminantia</taxon>
        <taxon>Pecora</taxon>
        <taxon>Bovidae</taxon>
        <taxon>Bovinae</taxon>
        <taxon>Bos</taxon>
    </lineage>
</organism>
<protein>
    <recommendedName>
        <fullName>Serine/threonine-protein kinase pim-1</fullName>
        <ecNumber>2.7.11.1</ecNumber>
    </recommendedName>
</protein>
<reference key="1">
    <citation type="journal article" date="2001" name="Vet. Immunol. Immunopathol.">
        <title>cDNA cloning, sequencing and characterization of bovine pim-1.</title>
        <authorList>
            <person name="Wang Z."/>
            <person name="Petersen K."/>
            <person name="Weaver M.S."/>
            <person name="Magnuson N.S."/>
        </authorList>
    </citation>
    <scope>NUCLEOTIDE SEQUENCE [MRNA]</scope>
</reference>
<keyword id="KW-0053">Apoptosis</keyword>
<keyword id="KW-0067">ATP-binding</keyword>
<keyword id="KW-0131">Cell cycle</keyword>
<keyword id="KW-0963">Cytoplasm</keyword>
<keyword id="KW-0418">Kinase</keyword>
<keyword id="KW-0460">Magnesium</keyword>
<keyword id="KW-0547">Nucleotide-binding</keyword>
<keyword id="KW-0539">Nucleus</keyword>
<keyword id="KW-0597">Phosphoprotein</keyword>
<keyword id="KW-0656">Proto-oncogene</keyword>
<keyword id="KW-1185">Reference proteome</keyword>
<keyword id="KW-0723">Serine/threonine-protein kinase</keyword>
<keyword id="KW-0808">Transferase</keyword>
<keyword id="KW-0832">Ubl conjugation</keyword>
<dbReference type="EC" id="2.7.11.1"/>
<dbReference type="EMBL" id="AF259078">
    <property type="protein sequence ID" value="AAF67200.1"/>
    <property type="molecule type" value="mRNA"/>
</dbReference>
<dbReference type="RefSeq" id="NP_776569.1">
    <property type="nucleotide sequence ID" value="NM_174144.2"/>
</dbReference>
<dbReference type="SMR" id="Q9N0P9"/>
<dbReference type="FunCoup" id="Q9N0P9">
    <property type="interactions" value="747"/>
</dbReference>
<dbReference type="STRING" id="9913.ENSBTAP00000000511"/>
<dbReference type="PaxDb" id="9913-ENSBTAP00000000511"/>
<dbReference type="Ensembl" id="ENSBTAT00000000511.6">
    <property type="protein sequence ID" value="ENSBTAP00000000511.5"/>
    <property type="gene ID" value="ENSBTAG00000000396.6"/>
</dbReference>
<dbReference type="GeneID" id="281402"/>
<dbReference type="KEGG" id="bta:281402"/>
<dbReference type="CTD" id="5292"/>
<dbReference type="VEuPathDB" id="HostDB:ENSBTAG00000000396"/>
<dbReference type="VGNC" id="VGNC:32899">
    <property type="gene designation" value="PIM1"/>
</dbReference>
<dbReference type="eggNOG" id="KOG0583">
    <property type="taxonomic scope" value="Eukaryota"/>
</dbReference>
<dbReference type="GeneTree" id="ENSGT00940000153394"/>
<dbReference type="HOGENOM" id="CLU_000288_63_0_1"/>
<dbReference type="InParanoid" id="Q9N0P9"/>
<dbReference type="OMA" id="IIRGQVY"/>
<dbReference type="OrthoDB" id="10252171at2759"/>
<dbReference type="TreeFam" id="TF320810"/>
<dbReference type="Proteomes" id="UP000009136">
    <property type="component" value="Chromosome 23"/>
</dbReference>
<dbReference type="Bgee" id="ENSBTAG00000000396">
    <property type="expression patterns" value="Expressed in esophagus and 106 other cell types or tissues"/>
</dbReference>
<dbReference type="GO" id="GO:0005737">
    <property type="term" value="C:cytoplasm"/>
    <property type="evidence" value="ECO:0000318"/>
    <property type="project" value="GO_Central"/>
</dbReference>
<dbReference type="GO" id="GO:0005634">
    <property type="term" value="C:nucleus"/>
    <property type="evidence" value="ECO:0007669"/>
    <property type="project" value="UniProtKB-SubCell"/>
</dbReference>
<dbReference type="GO" id="GO:0005524">
    <property type="term" value="F:ATP binding"/>
    <property type="evidence" value="ECO:0007669"/>
    <property type="project" value="UniProtKB-KW"/>
</dbReference>
<dbReference type="GO" id="GO:0106310">
    <property type="term" value="F:protein serine kinase activity"/>
    <property type="evidence" value="ECO:0007669"/>
    <property type="project" value="RHEA"/>
</dbReference>
<dbReference type="GO" id="GO:0004674">
    <property type="term" value="F:protein serine/threonine kinase activity"/>
    <property type="evidence" value="ECO:0000250"/>
    <property type="project" value="UniProtKB"/>
</dbReference>
<dbReference type="GO" id="GO:0006915">
    <property type="term" value="P:apoptotic process"/>
    <property type="evidence" value="ECO:0007669"/>
    <property type="project" value="UniProtKB-KW"/>
</dbReference>
<dbReference type="GO" id="GO:1990748">
    <property type="term" value="P:cellular detoxification"/>
    <property type="evidence" value="ECO:0000250"/>
    <property type="project" value="UniProtKB"/>
</dbReference>
<dbReference type="GO" id="GO:0071346">
    <property type="term" value="P:cellular response to type II interferon"/>
    <property type="evidence" value="ECO:0000250"/>
    <property type="project" value="UniProtKB"/>
</dbReference>
<dbReference type="GO" id="GO:0043066">
    <property type="term" value="P:negative regulation of apoptotic process"/>
    <property type="evidence" value="ECO:0000318"/>
    <property type="project" value="GO_Central"/>
</dbReference>
<dbReference type="GO" id="GO:0045824">
    <property type="term" value="P:negative regulation of innate immune response"/>
    <property type="evidence" value="ECO:0000250"/>
    <property type="project" value="UniProtKB"/>
</dbReference>
<dbReference type="GO" id="GO:0090336">
    <property type="term" value="P:positive regulation of brown fat cell differentiation"/>
    <property type="evidence" value="ECO:0000250"/>
    <property type="project" value="UniProtKB"/>
</dbReference>
<dbReference type="GO" id="GO:1904263">
    <property type="term" value="P:positive regulation of TORC1 signaling"/>
    <property type="evidence" value="ECO:0000250"/>
    <property type="project" value="UniProtKB"/>
</dbReference>
<dbReference type="GO" id="GO:0006468">
    <property type="term" value="P:protein phosphorylation"/>
    <property type="evidence" value="ECO:0000250"/>
    <property type="project" value="UniProtKB"/>
</dbReference>
<dbReference type="GO" id="GO:0007346">
    <property type="term" value="P:regulation of mitotic cell cycle"/>
    <property type="evidence" value="ECO:0000318"/>
    <property type="project" value="GO_Central"/>
</dbReference>
<dbReference type="GO" id="GO:0022898">
    <property type="term" value="P:regulation of transmembrane transporter activity"/>
    <property type="evidence" value="ECO:0000250"/>
    <property type="project" value="UniProtKB"/>
</dbReference>
<dbReference type="CDD" id="cd14100">
    <property type="entry name" value="STKc_PIM1"/>
    <property type="match status" value="1"/>
</dbReference>
<dbReference type="FunFam" id="1.10.510.10:FF:000209">
    <property type="entry name" value="Serine/threonine-protein kinase pim-1"/>
    <property type="match status" value="1"/>
</dbReference>
<dbReference type="FunFam" id="3.30.200.20:FF:000232">
    <property type="entry name" value="Serine/threonine-protein kinase pim-1"/>
    <property type="match status" value="1"/>
</dbReference>
<dbReference type="Gene3D" id="3.30.200.20">
    <property type="entry name" value="Phosphorylase Kinase, domain 1"/>
    <property type="match status" value="1"/>
</dbReference>
<dbReference type="Gene3D" id="1.10.510.10">
    <property type="entry name" value="Transferase(Phosphotransferase) domain 1"/>
    <property type="match status" value="1"/>
</dbReference>
<dbReference type="InterPro" id="IPR011009">
    <property type="entry name" value="Kinase-like_dom_sf"/>
</dbReference>
<dbReference type="InterPro" id="IPR017348">
    <property type="entry name" value="PIM1/2/3"/>
</dbReference>
<dbReference type="InterPro" id="IPR051138">
    <property type="entry name" value="PIM_Ser/Thr_kinase"/>
</dbReference>
<dbReference type="InterPro" id="IPR000719">
    <property type="entry name" value="Prot_kinase_dom"/>
</dbReference>
<dbReference type="InterPro" id="IPR017441">
    <property type="entry name" value="Protein_kinase_ATP_BS"/>
</dbReference>
<dbReference type="InterPro" id="IPR008271">
    <property type="entry name" value="Ser/Thr_kinase_AS"/>
</dbReference>
<dbReference type="PANTHER" id="PTHR22984">
    <property type="entry name" value="SERINE/THREONINE-PROTEIN KINASE PIM"/>
    <property type="match status" value="1"/>
</dbReference>
<dbReference type="PANTHER" id="PTHR22984:SF29">
    <property type="entry name" value="SERINE_THREONINE-PROTEIN KINASE PIM-1"/>
    <property type="match status" value="1"/>
</dbReference>
<dbReference type="Pfam" id="PF00069">
    <property type="entry name" value="Pkinase"/>
    <property type="match status" value="1"/>
</dbReference>
<dbReference type="PIRSF" id="PIRSF037993">
    <property type="entry name" value="STPK_Pim-1"/>
    <property type="match status" value="1"/>
</dbReference>
<dbReference type="SMART" id="SM00220">
    <property type="entry name" value="S_TKc"/>
    <property type="match status" value="1"/>
</dbReference>
<dbReference type="SUPFAM" id="SSF56112">
    <property type="entry name" value="Protein kinase-like (PK-like)"/>
    <property type="match status" value="1"/>
</dbReference>
<dbReference type="PROSITE" id="PS00107">
    <property type="entry name" value="PROTEIN_KINASE_ATP"/>
    <property type="match status" value="1"/>
</dbReference>
<dbReference type="PROSITE" id="PS50011">
    <property type="entry name" value="PROTEIN_KINASE_DOM"/>
    <property type="match status" value="1"/>
</dbReference>
<dbReference type="PROSITE" id="PS00108">
    <property type="entry name" value="PROTEIN_KINASE_ST"/>
    <property type="match status" value="1"/>
</dbReference>
<accession>Q9N0P9</accession>
<evidence type="ECO:0000250" key="1"/>
<evidence type="ECO:0000250" key="2">
    <source>
        <dbReference type="UniProtKB" id="P06803"/>
    </source>
</evidence>
<evidence type="ECO:0000250" key="3">
    <source>
        <dbReference type="UniProtKB" id="P11309"/>
    </source>
</evidence>
<evidence type="ECO:0000255" key="4">
    <source>
        <dbReference type="PROSITE-ProRule" id="PRU00159"/>
    </source>
</evidence>
<evidence type="ECO:0000255" key="5">
    <source>
        <dbReference type="PROSITE-ProRule" id="PRU10027"/>
    </source>
</evidence>
<evidence type="ECO:0000305" key="6"/>